<name>IHF_MYCS2</name>
<feature type="initiator methionine" description="Removed" evidence="5">
    <location>
        <position position="1"/>
    </location>
</feature>
<feature type="chain" id="PRO_0000458542" description="Integration host factor">
    <location>
        <begin position="2"/>
        <end position="105"/>
    </location>
</feature>
<feature type="region of interest" description="Lid, binds DNA" evidence="2">
    <location>
        <begin position="82"/>
        <end position="94"/>
    </location>
</feature>
<feature type="short sequence motif" description="H2TH motif, binds DNA" evidence="2">
    <location>
        <begin position="64"/>
        <end position="71"/>
    </location>
</feature>
<keyword id="KW-0010">Activator</keyword>
<keyword id="KW-0963">Cytoplasm</keyword>
<keyword id="KW-0903">Direct protein sequencing</keyword>
<keyword id="KW-0226">DNA condensation</keyword>
<keyword id="KW-0229">DNA integration</keyword>
<keyword id="KW-0233">DNA recombination</keyword>
<keyword id="KW-0238">DNA-binding</keyword>
<keyword id="KW-1185">Reference proteome</keyword>
<keyword id="KW-0678">Repressor</keyword>
<keyword id="KW-0804">Transcription</keyword>
<keyword id="KW-0805">Transcription regulation</keyword>
<keyword id="KW-1179">Viral genome integration</keyword>
<keyword id="KW-1160">Virus entry into host cell</keyword>
<dbReference type="EMBL" id="U75344">
    <property type="protein sequence ID" value="AAC28246.1"/>
    <property type="molecule type" value="Genomic_DNA"/>
</dbReference>
<dbReference type="EMBL" id="CP000480">
    <property type="protein sequence ID" value="ABK76141.1"/>
    <property type="molecule type" value="Genomic_DNA"/>
</dbReference>
<dbReference type="EMBL" id="CP001663">
    <property type="protein sequence ID" value="AFP39439.1"/>
    <property type="molecule type" value="Genomic_DNA"/>
</dbReference>
<dbReference type="RefSeq" id="WP_003894434.1">
    <property type="nucleotide sequence ID" value="NZ_SIJM01000002.1"/>
</dbReference>
<dbReference type="RefSeq" id="YP_887366.1">
    <property type="nucleotide sequence ID" value="NC_008596.1"/>
</dbReference>
<dbReference type="SMR" id="A0QWS8"/>
<dbReference type="STRING" id="246196.MSMEG_3050"/>
<dbReference type="PaxDb" id="246196-MSMEI_2975"/>
<dbReference type="GeneID" id="93457828"/>
<dbReference type="KEGG" id="msb:LJ00_15175"/>
<dbReference type="KEGG" id="msg:MSMEI_2975"/>
<dbReference type="KEGG" id="msm:MSMEG_3050"/>
<dbReference type="PATRIC" id="fig|246196.19.peg.3011"/>
<dbReference type="eggNOG" id="COG0099">
    <property type="taxonomic scope" value="Bacteria"/>
</dbReference>
<dbReference type="OrthoDB" id="3197442at2"/>
<dbReference type="Proteomes" id="UP000000757">
    <property type="component" value="Chromosome"/>
</dbReference>
<dbReference type="Proteomes" id="UP000006158">
    <property type="component" value="Chromosome"/>
</dbReference>
<dbReference type="GO" id="GO:0005737">
    <property type="term" value="C:cytoplasm"/>
    <property type="evidence" value="ECO:0007669"/>
    <property type="project" value="UniProtKB-KW"/>
</dbReference>
<dbReference type="GO" id="GO:0009295">
    <property type="term" value="C:nucleoid"/>
    <property type="evidence" value="ECO:0007669"/>
    <property type="project" value="UniProtKB-SubCell"/>
</dbReference>
<dbReference type="GO" id="GO:0003677">
    <property type="term" value="F:DNA binding"/>
    <property type="evidence" value="ECO:0007669"/>
    <property type="project" value="UniProtKB-KW"/>
</dbReference>
<dbReference type="GO" id="GO:0030261">
    <property type="term" value="P:chromosome condensation"/>
    <property type="evidence" value="ECO:0007669"/>
    <property type="project" value="UniProtKB-KW"/>
</dbReference>
<dbReference type="GO" id="GO:0015074">
    <property type="term" value="P:DNA integration"/>
    <property type="evidence" value="ECO:0007669"/>
    <property type="project" value="UniProtKB-KW"/>
</dbReference>
<dbReference type="GO" id="GO:0006310">
    <property type="term" value="P:DNA recombination"/>
    <property type="evidence" value="ECO:0007669"/>
    <property type="project" value="UniProtKB-KW"/>
</dbReference>
<dbReference type="GO" id="GO:0075713">
    <property type="term" value="P:establishment of integrated proviral latency"/>
    <property type="evidence" value="ECO:0007669"/>
    <property type="project" value="UniProtKB-KW"/>
</dbReference>
<dbReference type="GO" id="GO:0046718">
    <property type="term" value="P:symbiont entry into host cell"/>
    <property type="evidence" value="ECO:0007669"/>
    <property type="project" value="UniProtKB-KW"/>
</dbReference>
<dbReference type="GO" id="GO:0044826">
    <property type="term" value="P:viral genome integration into host DNA"/>
    <property type="evidence" value="ECO:0007669"/>
    <property type="project" value="UniProtKB-KW"/>
</dbReference>
<dbReference type="FunFam" id="1.10.8.50:FF:000004">
    <property type="entry name" value="Integration host factor"/>
    <property type="match status" value="1"/>
</dbReference>
<dbReference type="Gene3D" id="1.10.8.50">
    <property type="match status" value="1"/>
</dbReference>
<dbReference type="InterPro" id="IPR055201">
    <property type="entry name" value="IHF-like_H2TH"/>
</dbReference>
<dbReference type="InterPro" id="IPR047806">
    <property type="entry name" value="IHF_actinobact"/>
</dbReference>
<dbReference type="InterPro" id="IPR010979">
    <property type="entry name" value="Ribosomal_uS13-like_H2TH"/>
</dbReference>
<dbReference type="NCBIfam" id="NF041260">
    <property type="entry name" value="actino_IHF"/>
    <property type="match status" value="1"/>
</dbReference>
<dbReference type="Pfam" id="PF22525">
    <property type="entry name" value="H2TH_5"/>
    <property type="match status" value="1"/>
</dbReference>
<dbReference type="SUPFAM" id="SSF46946">
    <property type="entry name" value="S13-like H2TH domain"/>
    <property type="match status" value="1"/>
</dbReference>
<evidence type="ECO:0000250" key="1">
    <source>
        <dbReference type="UniProtKB" id="P71658"/>
    </source>
</evidence>
<evidence type="ECO:0000250" key="2">
    <source>
        <dbReference type="UniProtKB" id="Q9KXR9"/>
    </source>
</evidence>
<evidence type="ECO:0000269" key="3">
    <source>
    </source>
</evidence>
<evidence type="ECO:0000269" key="4">
    <source>
    </source>
</evidence>
<evidence type="ECO:0000269" key="5">
    <source>
    </source>
</evidence>
<evidence type="ECO:0000269" key="6">
    <source>
    </source>
</evidence>
<evidence type="ECO:0000269" key="7">
    <source>
    </source>
</evidence>
<evidence type="ECO:0000303" key="8">
    <source>
    </source>
</evidence>
<evidence type="ECO:0000303" key="9">
    <source>
    </source>
</evidence>
<evidence type="ECO:0000305" key="10"/>
<evidence type="ECO:0000312" key="11">
    <source>
        <dbReference type="EMBL" id="AAC28246.1"/>
    </source>
</evidence>
<evidence type="ECO:0000312" key="12">
    <source>
        <dbReference type="EMBL" id="ABK76141.1"/>
    </source>
</evidence>
<evidence type="ECO:0000312" key="13">
    <source>
        <dbReference type="EMBL" id="AFP39439.1"/>
    </source>
</evidence>
<sequence length="105" mass="11636">MALPQLTDEQRAAALEKAAAARRARAELKDRLKRGGTNLKQVLTDAETDEVLGKMKVSALLEALPKVGKVKAQEIMTELEIAPTRRLRGLGDRQRKALLEKFDQS</sequence>
<reference evidence="11" key="1">
    <citation type="journal article" date="1996" name="Proc. Natl. Acad. Sci. U.S.A.">
        <title>A novel host factor for integration of mycobacteriophage L5.</title>
        <authorList>
            <person name="Pedulla M.L."/>
            <person name="Lee M.H."/>
            <person name="Lever D.C."/>
            <person name="Hatfull G.F."/>
        </authorList>
    </citation>
    <scope>NUCLEOTIDE SEQUENCE [GENOMIC DNA]</scope>
    <scope>PROTEIN SEQUENCE OF 2-39</scope>
    <scope>FUNCTION</scope>
    <scope>FUNCTION (MICROBIAL INFECTION)</scope>
    <scope>SUBUNIT (MICROBIAL INFECTION)</scope>
    <scope>DNA-BINDING</scope>
</reference>
<reference evidence="12" key="2">
    <citation type="submission" date="2006-10" db="EMBL/GenBank/DDBJ databases">
        <authorList>
            <person name="Fleischmann R.D."/>
            <person name="Dodson R.J."/>
            <person name="Haft D.H."/>
            <person name="Merkel J.S."/>
            <person name="Nelson W.C."/>
            <person name="Fraser C.M."/>
        </authorList>
    </citation>
    <scope>NUCLEOTIDE SEQUENCE [LARGE SCALE GENOMIC DNA]</scope>
    <source>
        <strain>ATCC 700084 / mc(2)155</strain>
    </source>
</reference>
<reference evidence="13" key="3">
    <citation type="journal article" date="2007" name="Genome Biol.">
        <title>Interrupted coding sequences in Mycobacterium smegmatis: authentic mutations or sequencing errors?</title>
        <authorList>
            <person name="Deshayes C."/>
            <person name="Perrodou E."/>
            <person name="Gallien S."/>
            <person name="Euphrasie D."/>
            <person name="Schaeffer C."/>
            <person name="Van-Dorsselaer A."/>
            <person name="Poch O."/>
            <person name="Lecompte O."/>
            <person name="Reyrat J.-M."/>
        </authorList>
    </citation>
    <scope>NUCLEOTIDE SEQUENCE [LARGE SCALE GENOMIC DNA]</scope>
    <source>
        <strain>ATCC 700084 / mc(2)155</strain>
    </source>
</reference>
<reference evidence="13" key="4">
    <citation type="journal article" date="2009" name="Genome Res.">
        <title>Ortho-proteogenomics: multiple proteomes investigation through orthology and a new MS-based protocol.</title>
        <authorList>
            <person name="Gallien S."/>
            <person name="Perrodou E."/>
            <person name="Carapito C."/>
            <person name="Deshayes C."/>
            <person name="Reyrat J.-M."/>
            <person name="Van Dorsselaer A."/>
            <person name="Poch O."/>
            <person name="Schaeffer C."/>
            <person name="Lecompte O."/>
        </authorList>
    </citation>
    <scope>NUCLEOTIDE SEQUENCE [LARGE SCALE GENOMIC DNA]</scope>
    <source>
        <strain>ATCC 700084 / mc(2)155</strain>
    </source>
</reference>
<reference key="5">
    <citation type="journal article" date="1998" name="J. Bacteriol.">
        <title>Characterization of the mIHF gene of Mycobacterium smegmatis.</title>
        <authorList>
            <person name="Pedulla M.L."/>
            <person name="Hatfull G.F."/>
        </authorList>
    </citation>
    <scope>INDUCTION</scope>
    <scope>DISRUPTION PHENOTYPE</scope>
    <source>
        <strain>ATCC 700084 / mc(2)155</strain>
    </source>
</reference>
<reference key="6">
    <citation type="journal article" date="1999" name="J. Bacteriol.">
        <title>Protein-DNA complexes in mycobacteriophage L5 integrative recombination.</title>
        <authorList>
            <person name="Pena C.E."/>
            <person name="Kahlenberg J.M."/>
            <person name="Hatfull G.F."/>
        </authorList>
    </citation>
    <scope>FUNCTION (MICROBIAL INFECTION)</scope>
    <scope>SUBUNIT (MICROBIAL INFECTION)</scope>
    <source>
        <strain>ATCC 700084 / mc(2)155</strain>
    </source>
</reference>
<reference key="7">
    <citation type="journal article" date="2019" name="Tuberculosis">
        <title>Kinetic analysis of DNA compaction by mycobacterial integration host factor at the single-molecule level.</title>
        <authorList>
            <person name="Chen Y."/>
            <person name="Zhan Z."/>
            <person name="Zhang H."/>
            <person name="Bi L."/>
            <person name="Zhang X.E."/>
            <person name="Fu Y.V."/>
        </authorList>
    </citation>
    <scope>FUNCTION IN DNA COMPACTION</scope>
</reference>
<reference key="8">
    <citation type="journal article" date="2023" name="Front. Microbiol.">
        <title>Mycobacterial IHF is a highly dynamic nucleoid-associated protein that assists HupB in organizing chromatin.</title>
        <authorList>
            <person name="Holowka J."/>
            <person name="Lebkowski T."/>
            <person name="Feddersen H."/>
            <person name="Giacomelli G."/>
            <person name="Druzka K."/>
            <person name="Makowski L."/>
            <person name="Trojanowski D."/>
            <person name="Broda N."/>
            <person name="Bramkamp M."/>
            <person name="Zakrzewska-Czerwinska J."/>
        </authorList>
    </citation>
    <scope>FUNCTION</scope>
    <scope>SUBCELLULAR LOCATION</scope>
    <scope>INDUCTION</scope>
    <scope>DISRUPTION PHENOTYPE</scope>
    <scope>DNA-BINDING</scope>
</reference>
<organism>
    <name type="scientific">Mycolicibacterium smegmatis (strain ATCC 700084 / mc(2)155)</name>
    <name type="common">Mycobacterium smegmatis</name>
    <dbReference type="NCBI Taxonomy" id="246196"/>
    <lineage>
        <taxon>Bacteria</taxon>
        <taxon>Bacillati</taxon>
        <taxon>Actinomycetota</taxon>
        <taxon>Actinomycetes</taxon>
        <taxon>Mycobacteriales</taxon>
        <taxon>Mycobacteriaceae</taxon>
        <taxon>Mycolicibacterium</taxon>
    </lineage>
</organism>
<proteinExistence type="evidence at protein level"/>
<accession>A0QWS8</accession>
<accession>I7GAC9</accession>
<comment type="function">
    <text evidence="1 3 4 5">A nucleoid-associated protein (NAP) that binds DNA without any sequence specificity (PubMed:31733417, PubMed:36960278, PubMed:8986825). Compacts DNA (PubMed:31733417). Binds along the whole chromosome in a dynamic manner, has equal affinity for the oriC site, attB and a randon 62% GC-rich sequence (PubMed:36960278). Plays a role in transcription regulation (By similarity).</text>
</comment>
<comment type="function">
    <text evidence="5 7">(Microbial infection) Stimulates temperate Mycobacterium phage L5 Int-mediated recombination in vitro using supercoiled attP (phage attachment site) DNA, linear attB DNA (bacterial attachment site) and L5 integrase (L5 Int or Int-L5, AC P22884). mIHF acts on L5 Int to stimulate formation of a specific intasome complex (PubMed:8986825, PubMed:9882658). mIHF probably stabilizes a sharp bend in the DNA during phage integration (PubMed:9882658).</text>
</comment>
<comment type="subunit">
    <text evidence="2">Binds DNA as a monomer.</text>
</comment>
<comment type="subunit">
    <text evidence="5 7">(Microbial infection) Forms a complex with L5 Int and attP DNA (PubMed:8986825). The complex binds attB to form products (PubMed:9882658).</text>
</comment>
<comment type="subcellular location">
    <subcellularLocation>
        <location evidence="4">Cytoplasm</location>
        <location evidence="4">Nucleoid</location>
    </subcellularLocation>
    <text evidence="4">Found along the cell length in a bead-like pattern corresponding to DNA. Association with the chromosome is dynamic and responds to changes in DNA topology, colocalizes with HupB (hup).</text>
</comment>
<comment type="induction">
    <text evidence="4 6">Expression is maximal in late logarithmic growth (about 20 hours) and decreases rapidly after (at protein level) (PubMed:9765584). Transcribed at high levels in logarithmic growth, decreases in stationary phase (PubMed:36960278).</text>
</comment>
<comment type="disruption phenotype">
    <text evidence="4 6">Essential, it cannot be deleted (PubMed:9765584). Depletion leads to chromosome shrinkage and loss of cell growth after 4-5 generations, no visible change in chromosome structure or daughter segregation before 4-5 generations (PubMed:36960278).</text>
</comment>
<comment type="similarity">
    <text evidence="10">Belongs to the actinobacterial IHF (aIHF) family.</text>
</comment>
<protein>
    <recommendedName>
        <fullName evidence="9">Integration host factor</fullName>
    </recommendedName>
    <alternativeName>
        <fullName evidence="9">Mycobacterial integration host factor</fullName>
        <shortName evidence="9">mIHF</shortName>
        <shortName evidence="8">msIHF</shortName>
    </alternativeName>
</protein>
<gene>
    <name evidence="9" type="primary">mIHF</name>
    <name evidence="8" type="synonym">msihf</name>
    <name evidence="12" type="ordered locus">MSMEG_3050</name>
    <name evidence="12" type="ordered locus">MSMEI_2975</name>
</gene>